<feature type="chain" id="PRO_0000295164" description="Protein dead ringer homolog">
    <location>
        <begin position="1"/>
        <end position="571"/>
    </location>
</feature>
<feature type="domain" description="ARID" evidence="2">
    <location>
        <begin position="249"/>
        <end position="341"/>
    </location>
</feature>
<feature type="domain" description="REKLES" evidence="3">
    <location>
        <begin position="473"/>
        <end position="558"/>
    </location>
</feature>
<feature type="region of interest" description="Disordered" evidence="4">
    <location>
        <begin position="45"/>
        <end position="117"/>
    </location>
</feature>
<feature type="region of interest" description="Disordered" evidence="4">
    <location>
        <begin position="190"/>
        <end position="229"/>
    </location>
</feature>
<feature type="region of interest" description="Disordered" evidence="4">
    <location>
        <begin position="459"/>
        <end position="528"/>
    </location>
</feature>
<feature type="compositionally biased region" description="Basic and acidic residues" evidence="4">
    <location>
        <begin position="49"/>
        <end position="77"/>
    </location>
</feature>
<feature type="compositionally biased region" description="Polar residues" evidence="4">
    <location>
        <begin position="195"/>
        <end position="206"/>
    </location>
</feature>
<feature type="compositionally biased region" description="Low complexity" evidence="4">
    <location>
        <begin position="207"/>
        <end position="224"/>
    </location>
</feature>
<feature type="compositionally biased region" description="Low complexity" evidence="4">
    <location>
        <begin position="459"/>
        <end position="471"/>
    </location>
</feature>
<feature type="compositionally biased region" description="Basic and acidic residues" evidence="4">
    <location>
        <begin position="487"/>
        <end position="507"/>
    </location>
</feature>
<feature type="compositionally biased region" description="Basic and acidic residues" evidence="4">
    <location>
        <begin position="518"/>
        <end position="527"/>
    </location>
</feature>
<organism>
    <name type="scientific">Ciona intestinalis</name>
    <name type="common">Transparent sea squirt</name>
    <name type="synonym">Ascidia intestinalis</name>
    <dbReference type="NCBI Taxonomy" id="7719"/>
    <lineage>
        <taxon>Eukaryota</taxon>
        <taxon>Metazoa</taxon>
        <taxon>Chordata</taxon>
        <taxon>Tunicata</taxon>
        <taxon>Ascidiacea</taxon>
        <taxon>Phlebobranchia</taxon>
        <taxon>Cionidae</taxon>
        <taxon>Ciona</taxon>
    </lineage>
</organism>
<reference key="1">
    <citation type="journal article" date="2004" name="Development">
        <title>Gene expression profiles of transcription factors and signaling molecules in the ascidian embryo: towards a comprehensive understanding of gene networks.</title>
        <authorList>
            <person name="Imai K.S."/>
            <person name="Hino K."/>
            <person name="Yagi K."/>
            <person name="Satoh N."/>
            <person name="Satou Y."/>
        </authorList>
    </citation>
    <scope>NUCLEOTIDE SEQUENCE [MRNA]</scope>
</reference>
<name>DRI_CIOIN</name>
<dbReference type="EMBL" id="AB210377">
    <property type="protein sequence ID" value="BAE06382.1"/>
    <property type="molecule type" value="mRNA"/>
</dbReference>
<dbReference type="RefSeq" id="NP_001071682.1">
    <property type="nucleotide sequence ID" value="NM_001078214.2"/>
</dbReference>
<dbReference type="SMR" id="Q4H3P5"/>
<dbReference type="FunCoup" id="Q4H3P5">
    <property type="interactions" value="5"/>
</dbReference>
<dbReference type="STRING" id="7719.ENSCINP00000036568"/>
<dbReference type="Ensembl" id="ENSCINT00000037143.1">
    <property type="protein sequence ID" value="ENSCINP00000036568.1"/>
    <property type="gene ID" value="ENSCING00000020478.1"/>
</dbReference>
<dbReference type="GeneID" id="778579"/>
<dbReference type="KEGG" id="cin:778579"/>
<dbReference type="CTD" id="778579"/>
<dbReference type="eggNOG" id="KOG2744">
    <property type="taxonomic scope" value="Eukaryota"/>
</dbReference>
<dbReference type="GeneTree" id="ENSGT00940000169348"/>
<dbReference type="HOGENOM" id="CLU_026952_2_1_1"/>
<dbReference type="InParanoid" id="Q4H3P5"/>
<dbReference type="OMA" id="FECEREK"/>
<dbReference type="OrthoDB" id="10044343at2759"/>
<dbReference type="TreeFam" id="TF320364"/>
<dbReference type="Proteomes" id="UP000008144">
    <property type="component" value="Unassembled WGS sequence"/>
</dbReference>
<dbReference type="GO" id="GO:0005634">
    <property type="term" value="C:nucleus"/>
    <property type="evidence" value="ECO:0000318"/>
    <property type="project" value="GO_Central"/>
</dbReference>
<dbReference type="GO" id="GO:0003677">
    <property type="term" value="F:DNA binding"/>
    <property type="evidence" value="ECO:0000318"/>
    <property type="project" value="GO_Central"/>
</dbReference>
<dbReference type="GO" id="GO:0006357">
    <property type="term" value="P:regulation of transcription by RNA polymerase II"/>
    <property type="evidence" value="ECO:0000318"/>
    <property type="project" value="GO_Central"/>
</dbReference>
<dbReference type="CDD" id="cd16867">
    <property type="entry name" value="ARID_ARID3"/>
    <property type="match status" value="1"/>
</dbReference>
<dbReference type="FunFam" id="1.10.150.60:FF:000007">
    <property type="entry name" value="AT-rich interactive domain-containing protein 3C"/>
    <property type="match status" value="1"/>
</dbReference>
<dbReference type="Gene3D" id="1.10.150.60">
    <property type="entry name" value="ARID DNA-binding domain"/>
    <property type="match status" value="1"/>
</dbReference>
<dbReference type="InterPro" id="IPR045147">
    <property type="entry name" value="ARI3A/B/C"/>
</dbReference>
<dbReference type="InterPro" id="IPR001606">
    <property type="entry name" value="ARID_dom"/>
</dbReference>
<dbReference type="InterPro" id="IPR036431">
    <property type="entry name" value="ARID_dom_sf"/>
</dbReference>
<dbReference type="InterPro" id="IPR023334">
    <property type="entry name" value="REKLES_domain"/>
</dbReference>
<dbReference type="PANTHER" id="PTHR15348">
    <property type="entry name" value="AT-RICH INTERACTIVE DOMAIN-CONTAINING PROTEIN ARID DOMAIN- CONTAINING PROTEIN DEAD RINGER PROTEIN B-CELL REGULATOR OF IGH TRANSCRIPTION BRIGHT"/>
    <property type="match status" value="1"/>
</dbReference>
<dbReference type="PANTHER" id="PTHR15348:SF0">
    <property type="entry name" value="PROTEIN DEAD RINGER"/>
    <property type="match status" value="1"/>
</dbReference>
<dbReference type="Pfam" id="PF01388">
    <property type="entry name" value="ARID"/>
    <property type="match status" value="1"/>
</dbReference>
<dbReference type="SMART" id="SM01014">
    <property type="entry name" value="ARID"/>
    <property type="match status" value="1"/>
</dbReference>
<dbReference type="SMART" id="SM00501">
    <property type="entry name" value="BRIGHT"/>
    <property type="match status" value="1"/>
</dbReference>
<dbReference type="SUPFAM" id="SSF46774">
    <property type="entry name" value="ARID-like"/>
    <property type="match status" value="1"/>
</dbReference>
<dbReference type="PROSITE" id="PS51011">
    <property type="entry name" value="ARID"/>
    <property type="match status" value="1"/>
</dbReference>
<dbReference type="PROSITE" id="PS51486">
    <property type="entry name" value="REKLES"/>
    <property type="match status" value="1"/>
</dbReference>
<evidence type="ECO:0000250" key="1"/>
<evidence type="ECO:0000255" key="2">
    <source>
        <dbReference type="PROSITE-ProRule" id="PRU00355"/>
    </source>
</evidence>
<evidence type="ECO:0000255" key="3">
    <source>
        <dbReference type="PROSITE-ProRule" id="PRU00819"/>
    </source>
</evidence>
<evidence type="ECO:0000256" key="4">
    <source>
        <dbReference type="SAM" id="MobiDB-lite"/>
    </source>
</evidence>
<protein>
    <recommendedName>
        <fullName>Protein dead ringer homolog</fullName>
    </recommendedName>
</protein>
<accession>Q4H3P5</accession>
<comment type="function">
    <text evidence="1">Transcription factor.</text>
</comment>
<comment type="subcellular location">
    <subcellularLocation>
        <location evidence="2">Nucleus</location>
    </subcellularLocation>
</comment>
<gene>
    <name type="primary">Ci-DRIL1/2</name>
</gene>
<keyword id="KW-0238">DNA-binding</keyword>
<keyword id="KW-0539">Nucleus</keyword>
<keyword id="KW-1185">Reference proteome</keyword>
<keyword id="KW-0804">Transcription</keyword>
<keyword id="KW-0805">Transcription regulation</keyword>
<sequence length="571" mass="63854">MMLSNISQTKAELLSGLGSSLTSSPGNVSAATMKLEAVMENLQRQHQQRMMEQHKNDDVISNDVRCDDFSDGGERQRSYSGSPKEDSDEDRNDMTSPMMRDDDDVMQSDGRSPEPDKTSLITQQMAFAAALAQRSSPDGSLSSLVPQAMMQHFGQFPASFDASQLPQGFRELAMLQHQHVAQRMAMEAQKRMQQDHNIQQSTNHIPTPSSASSHTSSGSVTSQTNSCNGSQQEWTYEEQFKQLYEIDDDIKRKEFLDDLFSFMQKRGTPVNRIPIMAKQVLDLYQLYRLVVEKGGLVEVINKKIWREITKGLNLPSSITSAAFTLRTQYMKYLYPFECEREKLSVPSELQAAIEGNRREGRRPSYSSHMFSYSPNTSANMLTPPKFPFAHHNGLAQLSQMAAAKYGQPDERCLPTSPTQQLIAQQQQLLQSANAQHVAAMAALETIQNQAKARQAAQQAAHHAAQQAAQHQMSLKKEIDSDYSEGEPPEKKLSFDDSVRRLTPDNQRRSSTSSLKISMGDRGRHNEMSDVTNADSINICVEVNGITYQGVLFAHSPNHPPVKHVTLDHPTS</sequence>
<proteinExistence type="evidence at transcript level"/>